<keyword id="KW-0050">Antiport</keyword>
<keyword id="KW-1003">Cell membrane</keyword>
<keyword id="KW-0375">Hydrogen ion transport</keyword>
<keyword id="KW-0406">Ion transport</keyword>
<keyword id="KW-0472">Membrane</keyword>
<keyword id="KW-0915">Sodium</keyword>
<keyword id="KW-0739">Sodium transport</keyword>
<keyword id="KW-0812">Transmembrane</keyword>
<keyword id="KW-1133">Transmembrane helix</keyword>
<keyword id="KW-0813">Transport</keyword>
<gene>
    <name type="primary">mnhA1</name>
    <name type="ordered locus">SaurJH1_0971</name>
</gene>
<sequence length="801" mass="89362">MSLLHIAVILPLIFALIIPILYRFFKRIHLGWFVLPVPIVIFIYMLTLIKTTMSGNTVMKTLNWMPHFGMNFDLYLDGLGLLFSLLISGIGSLVVLYSIGYLSKSEQLGNFYCYLLLFMGAMLGVVLSDNVIILYLFWELTSFSSFLLISFWRERQASIYGAQKSLIITVFGGLSLLGGIILLAIPTQSFSIQYMIQHASEIQNSPFFIFAMILIMIGAFTKSAQFPFYIWLPDAMEAPTPVSAYLHSATMVKAGLYLIARMTPIFAASQGWVWTVTLVGLITLFWASLNATKQQDLKGILAFSTVSQLGMIMAMLGIGAISYHYQGDDSKIYAAAFTAAIFHLINHATFKGALFMITGAVDHSTGTRDVKKLGGLLTIMPISFTITVITALSMAGVPPFNGFLSKESFLETTFTASQANLFSVDTLGYLFPIIGIVGSVFTFVYSIKFIMHIFFGQYKPEQLPKKAHEVSILMLLSPAILATLVIVLGLFPGILTNSIIEPATSSINHTVIDDVEFHMFHGLTPAFLSTLVIYILGILLIVTFSYWVKLLQRQPGKLTFNYWYNRSANVIPNYSEKMTNSYVTDYSRNNLVIIFGALILLTFVTIFSVPFNINFKDVSPIRIFEVCIVILLLSAAFLILFAKSRLFSIIMLSAVGYAVSVLFIFFKAPDLALTQFVVESISTALFLLCFYHLPNLNRYNEKRSFQLTNALIAGGVGLSVIIIGLIAYGNRHFESISKFYQEHVYDLAHGKNMVNVILVDFRGMDTLFESSVLGIAGLAVYTMIKLRKKRQTQGNEVKNHE</sequence>
<feature type="chain" id="PRO_0000372094" description="Na(+)/H(+) antiporter subunit A1">
    <location>
        <begin position="1"/>
        <end position="801"/>
    </location>
</feature>
<feature type="transmembrane region" description="Helical" evidence="2">
    <location>
        <begin position="1"/>
        <end position="21"/>
    </location>
</feature>
<feature type="transmembrane region" description="Helical" evidence="2">
    <location>
        <begin position="28"/>
        <end position="48"/>
    </location>
</feature>
<feature type="transmembrane region" description="Helical" evidence="2">
    <location>
        <begin position="79"/>
        <end position="99"/>
    </location>
</feature>
<feature type="transmembrane region" description="Helical" evidence="2">
    <location>
        <begin position="117"/>
        <end position="137"/>
    </location>
</feature>
<feature type="transmembrane region" description="Helical" evidence="2">
    <location>
        <begin position="166"/>
        <end position="186"/>
    </location>
</feature>
<feature type="transmembrane region" description="Helical" evidence="2">
    <location>
        <begin position="206"/>
        <end position="226"/>
    </location>
</feature>
<feature type="transmembrane region" description="Helical" evidence="2">
    <location>
        <begin position="265"/>
        <end position="285"/>
    </location>
</feature>
<feature type="transmembrane region" description="Helical" evidence="2">
    <location>
        <begin position="300"/>
        <end position="320"/>
    </location>
</feature>
<feature type="transmembrane region" description="Helical" evidence="2">
    <location>
        <begin position="337"/>
        <end position="357"/>
    </location>
</feature>
<feature type="transmembrane region" description="Helical" evidence="2">
    <location>
        <begin position="373"/>
        <end position="393"/>
    </location>
</feature>
<feature type="transmembrane region" description="Helical" evidence="2">
    <location>
        <begin position="427"/>
        <end position="447"/>
    </location>
</feature>
<feature type="transmembrane region" description="Helical" evidence="2">
    <location>
        <begin position="472"/>
        <end position="492"/>
    </location>
</feature>
<feature type="transmembrane region" description="Helical" evidence="2">
    <location>
        <begin position="522"/>
        <end position="542"/>
    </location>
</feature>
<feature type="transmembrane region" description="Helical" evidence="2">
    <location>
        <begin position="591"/>
        <end position="611"/>
    </location>
</feature>
<feature type="transmembrane region" description="Helical" evidence="2">
    <location>
        <begin position="623"/>
        <end position="643"/>
    </location>
</feature>
<feature type="transmembrane region" description="Helical" evidence="2">
    <location>
        <begin position="646"/>
        <end position="666"/>
    </location>
</feature>
<feature type="transmembrane region" description="Helical" evidence="2">
    <location>
        <begin position="671"/>
        <end position="691"/>
    </location>
</feature>
<feature type="transmembrane region" description="Helical" evidence="2">
    <location>
        <begin position="707"/>
        <end position="727"/>
    </location>
</feature>
<feature type="transmembrane region" description="Helical" evidence="2">
    <location>
        <begin position="764"/>
        <end position="784"/>
    </location>
</feature>
<accession>A6U059</accession>
<proteinExistence type="inferred from homology"/>
<dbReference type="EMBL" id="CP000736">
    <property type="protein sequence ID" value="ABR51827.1"/>
    <property type="molecule type" value="Genomic_DNA"/>
</dbReference>
<dbReference type="SMR" id="A6U059"/>
<dbReference type="KEGG" id="sah:SaurJH1_0971"/>
<dbReference type="HOGENOM" id="CLU_007100_2_1_9"/>
<dbReference type="GO" id="GO:0005886">
    <property type="term" value="C:plasma membrane"/>
    <property type="evidence" value="ECO:0007669"/>
    <property type="project" value="UniProtKB-SubCell"/>
</dbReference>
<dbReference type="GO" id="GO:0015297">
    <property type="term" value="F:antiporter activity"/>
    <property type="evidence" value="ECO:0007669"/>
    <property type="project" value="UniProtKB-KW"/>
</dbReference>
<dbReference type="GO" id="GO:1902600">
    <property type="term" value="P:proton transmembrane transport"/>
    <property type="evidence" value="ECO:0007669"/>
    <property type="project" value="UniProtKB-KW"/>
</dbReference>
<dbReference type="GO" id="GO:0006814">
    <property type="term" value="P:sodium ion transport"/>
    <property type="evidence" value="ECO:0007669"/>
    <property type="project" value="UniProtKB-KW"/>
</dbReference>
<dbReference type="InterPro" id="IPR050616">
    <property type="entry name" value="CPA3_Na-H_Antiporter_A"/>
</dbReference>
<dbReference type="InterPro" id="IPR005663">
    <property type="entry name" value="MrpA/MnhA1/PhaAB"/>
</dbReference>
<dbReference type="InterPro" id="IPR025383">
    <property type="entry name" value="MrpA_C/MbhD"/>
</dbReference>
<dbReference type="InterPro" id="IPR046806">
    <property type="entry name" value="MrpA_C/MbhE"/>
</dbReference>
<dbReference type="InterPro" id="IPR001750">
    <property type="entry name" value="ND/Mrp_TM"/>
</dbReference>
<dbReference type="InterPro" id="IPR001516">
    <property type="entry name" value="Proton_antipo_N"/>
</dbReference>
<dbReference type="NCBIfam" id="TIGR00940">
    <property type="entry name" value="2a6301s01"/>
    <property type="match status" value="1"/>
</dbReference>
<dbReference type="NCBIfam" id="NF009285">
    <property type="entry name" value="PRK12645.1"/>
    <property type="match status" value="1"/>
</dbReference>
<dbReference type="PANTHER" id="PTHR43373">
    <property type="entry name" value="NA(+)/H(+) ANTIPORTER SUBUNIT"/>
    <property type="match status" value="1"/>
</dbReference>
<dbReference type="PANTHER" id="PTHR43373:SF1">
    <property type="entry name" value="NA(+)_H(+) ANTIPORTER SUBUNIT A"/>
    <property type="match status" value="1"/>
</dbReference>
<dbReference type="Pfam" id="PF13244">
    <property type="entry name" value="MbhD"/>
    <property type="match status" value="1"/>
</dbReference>
<dbReference type="Pfam" id="PF20501">
    <property type="entry name" value="MbhE"/>
    <property type="match status" value="1"/>
</dbReference>
<dbReference type="Pfam" id="PF00361">
    <property type="entry name" value="Proton_antipo_M"/>
    <property type="match status" value="1"/>
</dbReference>
<dbReference type="Pfam" id="PF00662">
    <property type="entry name" value="Proton_antipo_N"/>
    <property type="match status" value="1"/>
</dbReference>
<dbReference type="PRINTS" id="PR01434">
    <property type="entry name" value="NADHDHGNASE5"/>
</dbReference>
<dbReference type="PRINTS" id="PR01435">
    <property type="entry name" value="NPOXDRDTASE5"/>
</dbReference>
<organism>
    <name type="scientific">Staphylococcus aureus (strain JH1)</name>
    <dbReference type="NCBI Taxonomy" id="359787"/>
    <lineage>
        <taxon>Bacteria</taxon>
        <taxon>Bacillati</taxon>
        <taxon>Bacillota</taxon>
        <taxon>Bacilli</taxon>
        <taxon>Bacillales</taxon>
        <taxon>Staphylococcaceae</taxon>
        <taxon>Staphylococcus</taxon>
    </lineage>
</organism>
<comment type="function">
    <text evidence="1">Mnh complex is a Na(+)/H(+) antiporter involved in Na(+) excretion.</text>
</comment>
<comment type="subunit">
    <text evidence="1">May form a heterooligomeric complex that consists of seven subunits: mnhA1, mnhB1, mnhC1, mnhD1, mnhE1, mnhF1 and mnhG1.</text>
</comment>
<comment type="subcellular location">
    <subcellularLocation>
        <location evidence="3">Cell membrane</location>
        <topology evidence="3">Multi-pass membrane protein</topology>
    </subcellularLocation>
</comment>
<comment type="similarity">
    <text evidence="3">Belongs to the CPA3 antiporters (TC 2.A.63) subunit A family.</text>
</comment>
<name>MNHA1_STAA2</name>
<evidence type="ECO:0000250" key="1"/>
<evidence type="ECO:0000255" key="2"/>
<evidence type="ECO:0000305" key="3"/>
<protein>
    <recommendedName>
        <fullName>Na(+)/H(+) antiporter subunit A1</fullName>
    </recommendedName>
    <alternativeName>
        <fullName>Mnh complex subunit A1</fullName>
    </alternativeName>
</protein>
<reference key="1">
    <citation type="submission" date="2007-06" db="EMBL/GenBank/DDBJ databases">
        <title>Complete sequence of chromosome of Staphylococcus aureus subsp. aureus JH1.</title>
        <authorList>
            <consortium name="US DOE Joint Genome Institute"/>
            <person name="Copeland A."/>
            <person name="Lucas S."/>
            <person name="Lapidus A."/>
            <person name="Barry K."/>
            <person name="Detter J.C."/>
            <person name="Glavina del Rio T."/>
            <person name="Hammon N."/>
            <person name="Israni S."/>
            <person name="Dalin E."/>
            <person name="Tice H."/>
            <person name="Pitluck S."/>
            <person name="Chain P."/>
            <person name="Malfatti S."/>
            <person name="Shin M."/>
            <person name="Vergez L."/>
            <person name="Schmutz J."/>
            <person name="Larimer F."/>
            <person name="Land M."/>
            <person name="Hauser L."/>
            <person name="Kyrpides N."/>
            <person name="Ivanova N."/>
            <person name="Tomasz A."/>
            <person name="Richardson P."/>
        </authorList>
    </citation>
    <scope>NUCLEOTIDE SEQUENCE [LARGE SCALE GENOMIC DNA]</scope>
    <source>
        <strain>JH1</strain>
    </source>
</reference>